<accession>B3PXY7</accession>
<dbReference type="EC" id="4.2.1.10" evidence="1"/>
<dbReference type="EMBL" id="CP001074">
    <property type="protein sequence ID" value="ACE90923.1"/>
    <property type="molecule type" value="Genomic_DNA"/>
</dbReference>
<dbReference type="SMR" id="B3PXY7"/>
<dbReference type="KEGG" id="rec:RHECIAT_CH0001957"/>
<dbReference type="eggNOG" id="COG0757">
    <property type="taxonomic scope" value="Bacteria"/>
</dbReference>
<dbReference type="HOGENOM" id="CLU_090968_2_0_5"/>
<dbReference type="UniPathway" id="UPA00053">
    <property type="reaction ID" value="UER00086"/>
</dbReference>
<dbReference type="Proteomes" id="UP000008817">
    <property type="component" value="Chromosome"/>
</dbReference>
<dbReference type="GO" id="GO:0003855">
    <property type="term" value="F:3-dehydroquinate dehydratase activity"/>
    <property type="evidence" value="ECO:0007669"/>
    <property type="project" value="UniProtKB-UniRule"/>
</dbReference>
<dbReference type="GO" id="GO:0008652">
    <property type="term" value="P:amino acid biosynthetic process"/>
    <property type="evidence" value="ECO:0007669"/>
    <property type="project" value="UniProtKB-KW"/>
</dbReference>
<dbReference type="GO" id="GO:0009073">
    <property type="term" value="P:aromatic amino acid family biosynthetic process"/>
    <property type="evidence" value="ECO:0007669"/>
    <property type="project" value="UniProtKB-KW"/>
</dbReference>
<dbReference type="GO" id="GO:0009423">
    <property type="term" value="P:chorismate biosynthetic process"/>
    <property type="evidence" value="ECO:0007669"/>
    <property type="project" value="UniProtKB-UniRule"/>
</dbReference>
<dbReference type="GO" id="GO:0019631">
    <property type="term" value="P:quinate catabolic process"/>
    <property type="evidence" value="ECO:0007669"/>
    <property type="project" value="TreeGrafter"/>
</dbReference>
<dbReference type="CDD" id="cd00466">
    <property type="entry name" value="DHQase_II"/>
    <property type="match status" value="1"/>
</dbReference>
<dbReference type="Gene3D" id="3.40.50.9100">
    <property type="entry name" value="Dehydroquinase, class II"/>
    <property type="match status" value="1"/>
</dbReference>
<dbReference type="HAMAP" id="MF_00169">
    <property type="entry name" value="AroQ"/>
    <property type="match status" value="1"/>
</dbReference>
<dbReference type="InterPro" id="IPR001874">
    <property type="entry name" value="DHquinase_II"/>
</dbReference>
<dbReference type="InterPro" id="IPR018509">
    <property type="entry name" value="DHquinase_II_CS"/>
</dbReference>
<dbReference type="InterPro" id="IPR036441">
    <property type="entry name" value="DHquinase_II_sf"/>
</dbReference>
<dbReference type="NCBIfam" id="TIGR01088">
    <property type="entry name" value="aroQ"/>
    <property type="match status" value="1"/>
</dbReference>
<dbReference type="NCBIfam" id="NF003805">
    <property type="entry name" value="PRK05395.1-2"/>
    <property type="match status" value="1"/>
</dbReference>
<dbReference type="NCBIfam" id="NF003806">
    <property type="entry name" value="PRK05395.1-3"/>
    <property type="match status" value="1"/>
</dbReference>
<dbReference type="NCBIfam" id="NF003807">
    <property type="entry name" value="PRK05395.1-4"/>
    <property type="match status" value="1"/>
</dbReference>
<dbReference type="PANTHER" id="PTHR21272">
    <property type="entry name" value="CATABOLIC 3-DEHYDROQUINASE"/>
    <property type="match status" value="1"/>
</dbReference>
<dbReference type="PANTHER" id="PTHR21272:SF3">
    <property type="entry name" value="CATABOLIC 3-DEHYDROQUINASE"/>
    <property type="match status" value="1"/>
</dbReference>
<dbReference type="Pfam" id="PF01220">
    <property type="entry name" value="DHquinase_II"/>
    <property type="match status" value="1"/>
</dbReference>
<dbReference type="PIRSF" id="PIRSF001399">
    <property type="entry name" value="DHquinase_II"/>
    <property type="match status" value="1"/>
</dbReference>
<dbReference type="SUPFAM" id="SSF52304">
    <property type="entry name" value="Type II 3-dehydroquinate dehydratase"/>
    <property type="match status" value="1"/>
</dbReference>
<dbReference type="PROSITE" id="PS01029">
    <property type="entry name" value="DEHYDROQUINASE_II"/>
    <property type="match status" value="1"/>
</dbReference>
<protein>
    <recommendedName>
        <fullName evidence="1">3-dehydroquinate dehydratase</fullName>
        <shortName evidence="1">3-dehydroquinase</shortName>
        <ecNumber evidence="1">4.2.1.10</ecNumber>
    </recommendedName>
    <alternativeName>
        <fullName evidence="1">Type II DHQase</fullName>
    </alternativeName>
</protein>
<proteinExistence type="inferred from homology"/>
<sequence>MTQTIFVLNGPNLNMLGKREPGIYGGKTLKDIEADCKVAGRELGFDIDFRQSNHEGTLVDWFHEADEKAVGVAFNAGAYTHTSVALHDAIRAISIPVVELHISNVHAREEFRHKSMIAPACKGVICGFGPHSYILALHALKNITA</sequence>
<feature type="chain" id="PRO_1000097617" description="3-dehydroquinate dehydratase">
    <location>
        <begin position="1"/>
        <end position="145"/>
    </location>
</feature>
<feature type="active site" description="Proton acceptor" evidence="1">
    <location>
        <position position="24"/>
    </location>
</feature>
<feature type="active site" description="Proton donor" evidence="1">
    <location>
        <position position="101"/>
    </location>
</feature>
<feature type="binding site" evidence="1">
    <location>
        <position position="75"/>
    </location>
    <ligand>
        <name>substrate</name>
    </ligand>
</feature>
<feature type="binding site" evidence="1">
    <location>
        <position position="81"/>
    </location>
    <ligand>
        <name>substrate</name>
    </ligand>
</feature>
<feature type="binding site" evidence="1">
    <location>
        <position position="88"/>
    </location>
    <ligand>
        <name>substrate</name>
    </ligand>
</feature>
<feature type="binding site" evidence="1">
    <location>
        <begin position="102"/>
        <end position="103"/>
    </location>
    <ligand>
        <name>substrate</name>
    </ligand>
</feature>
<feature type="binding site" evidence="1">
    <location>
        <position position="112"/>
    </location>
    <ligand>
        <name>substrate</name>
    </ligand>
</feature>
<feature type="site" description="Transition state stabilizer" evidence="1">
    <location>
        <position position="19"/>
    </location>
</feature>
<keyword id="KW-0028">Amino-acid biosynthesis</keyword>
<keyword id="KW-0057">Aromatic amino acid biosynthesis</keyword>
<keyword id="KW-0456">Lyase</keyword>
<comment type="function">
    <text evidence="1">Catalyzes a trans-dehydration via an enolate intermediate.</text>
</comment>
<comment type="catalytic activity">
    <reaction evidence="1">
        <text>3-dehydroquinate = 3-dehydroshikimate + H2O</text>
        <dbReference type="Rhea" id="RHEA:21096"/>
        <dbReference type="ChEBI" id="CHEBI:15377"/>
        <dbReference type="ChEBI" id="CHEBI:16630"/>
        <dbReference type="ChEBI" id="CHEBI:32364"/>
        <dbReference type="EC" id="4.2.1.10"/>
    </reaction>
</comment>
<comment type="pathway">
    <text evidence="1">Metabolic intermediate biosynthesis; chorismate biosynthesis; chorismate from D-erythrose 4-phosphate and phosphoenolpyruvate: step 3/7.</text>
</comment>
<comment type="subunit">
    <text evidence="1">Homododecamer.</text>
</comment>
<comment type="similarity">
    <text evidence="1">Belongs to the type-II 3-dehydroquinase family.</text>
</comment>
<name>AROQ_RHIE6</name>
<organism>
    <name type="scientific">Rhizobium etli (strain CIAT 652)</name>
    <dbReference type="NCBI Taxonomy" id="491916"/>
    <lineage>
        <taxon>Bacteria</taxon>
        <taxon>Pseudomonadati</taxon>
        <taxon>Pseudomonadota</taxon>
        <taxon>Alphaproteobacteria</taxon>
        <taxon>Hyphomicrobiales</taxon>
        <taxon>Rhizobiaceae</taxon>
        <taxon>Rhizobium/Agrobacterium group</taxon>
        <taxon>Rhizobium</taxon>
    </lineage>
</organism>
<evidence type="ECO:0000255" key="1">
    <source>
        <dbReference type="HAMAP-Rule" id="MF_00169"/>
    </source>
</evidence>
<gene>
    <name evidence="1" type="primary">aroQ</name>
    <name type="ordered locus">RHECIAT_CH0001957</name>
</gene>
<reference key="1">
    <citation type="journal article" date="2010" name="Appl. Environ. Microbiol.">
        <title>Conserved symbiotic plasmid DNA sequences in the multireplicon pangenomic structure of Rhizobium etli.</title>
        <authorList>
            <person name="Gonzalez V."/>
            <person name="Acosta J.L."/>
            <person name="Santamaria R.I."/>
            <person name="Bustos P."/>
            <person name="Fernandez J.L."/>
            <person name="Hernandez Gonzalez I.L."/>
            <person name="Diaz R."/>
            <person name="Flores M."/>
            <person name="Palacios R."/>
            <person name="Mora J."/>
            <person name="Davila G."/>
        </authorList>
    </citation>
    <scope>NUCLEOTIDE SEQUENCE [LARGE SCALE GENOMIC DNA]</scope>
    <source>
        <strain>CIAT 652</strain>
    </source>
</reference>